<gene>
    <name evidence="1" type="primary">tilS</name>
    <name type="synonym">ycf62</name>
    <name type="ordered locus">Grc000193</name>
</gene>
<evidence type="ECO:0000255" key="1">
    <source>
        <dbReference type="HAMAP-Rule" id="MF_01161"/>
    </source>
</evidence>
<reference key="1">
    <citation type="journal article" date="2004" name="J. Mol. Evol.">
        <title>Comparative analysis of the complete plastid genome sequence of the red alga Gracilaria tenuistipitata var. liui provides insights into the evolution of rhodoplasts and their relationship to other plastids.</title>
        <authorList>
            <person name="Hagopian J.C."/>
            <person name="Reis M."/>
            <person name="Kitajima J.P."/>
            <person name="Bhattacharya D."/>
            <person name="de Oliveira M.C."/>
        </authorList>
    </citation>
    <scope>NUCLEOTIDE SEQUENCE [LARGE SCALE GENOMIC DNA]</scope>
</reference>
<keyword id="KW-0067">ATP-binding</keyword>
<keyword id="KW-0150">Chloroplast</keyword>
<keyword id="KW-0436">Ligase</keyword>
<keyword id="KW-0547">Nucleotide-binding</keyword>
<keyword id="KW-0934">Plastid</keyword>
<keyword id="KW-0819">tRNA processing</keyword>
<name>TILS_GRATL</name>
<sequence>MTYTYLHNKFLSIIPKYKNLIKPLSILIALSGGKDSLCLVKLIEDFNNTYNHFSRIEYIYIDHQWRSDSKQNIKHLLNYISITNNNTYIYQINKMEISEANMRNIRYQAIVRHAIQNSHDIIVTGHNQTDQVETFLLNLMRGTGLEGLSSLPYIRKITDQIQVIRPLIHINTGDVLWFCRKFNLPIWSDKTNFYYTNFRNRIRYELLPYLKEYFHPKIESNIINFLSLSSIENEYIKQNSIKLYLASRHSHYIAINYKIIKNQHLALQKRVLNIFFYHNFNKYVNSHILNQLIKMKYQRKLTIVWETLRIKIYKNWIYIQ</sequence>
<geneLocation type="chloroplast"/>
<accession>Q6B8L1</accession>
<proteinExistence type="inferred from homology"/>
<organism>
    <name type="scientific">Gracilaria tenuistipitata var. liui</name>
    <name type="common">Red alga</name>
    <dbReference type="NCBI Taxonomy" id="285951"/>
    <lineage>
        <taxon>Eukaryota</taxon>
        <taxon>Rhodophyta</taxon>
        <taxon>Florideophyceae</taxon>
        <taxon>Rhodymeniophycidae</taxon>
        <taxon>Gracilariales</taxon>
        <taxon>Gracilariaceae</taxon>
        <taxon>Gracilaria</taxon>
        <taxon>Gracilaria tenuistipitata</taxon>
    </lineage>
</organism>
<protein>
    <recommendedName>
        <fullName evidence="1">tRNA(Ile)-lysidine synthase, chloroplastic</fullName>
        <ecNumber evidence="1">6.3.4.19</ecNumber>
    </recommendedName>
    <alternativeName>
        <fullName evidence="1">tRNA(Ile)-2-lysyl-cytidine synthase</fullName>
    </alternativeName>
    <alternativeName>
        <fullName evidence="1">tRNA(Ile)-lysidine synthetase</fullName>
    </alternativeName>
</protein>
<comment type="function">
    <text evidence="1">Ligates lysine onto the cytidine present at position 34 of the AUA codon-specific tRNA(Ile) that contains the anticodon CAU, in an ATP-dependent manner. Cytidine is converted to lysidine, thus changing the amino acid specificity of the tRNA from methionine to isoleucine.</text>
</comment>
<comment type="catalytic activity">
    <reaction evidence="1">
        <text>cytidine(34) in tRNA(Ile2) + L-lysine + ATP = lysidine(34) in tRNA(Ile2) + AMP + diphosphate + H(+)</text>
        <dbReference type="Rhea" id="RHEA:43744"/>
        <dbReference type="Rhea" id="RHEA-COMP:10625"/>
        <dbReference type="Rhea" id="RHEA-COMP:10670"/>
        <dbReference type="ChEBI" id="CHEBI:15378"/>
        <dbReference type="ChEBI" id="CHEBI:30616"/>
        <dbReference type="ChEBI" id="CHEBI:32551"/>
        <dbReference type="ChEBI" id="CHEBI:33019"/>
        <dbReference type="ChEBI" id="CHEBI:82748"/>
        <dbReference type="ChEBI" id="CHEBI:83665"/>
        <dbReference type="ChEBI" id="CHEBI:456215"/>
        <dbReference type="EC" id="6.3.4.19"/>
    </reaction>
</comment>
<comment type="subcellular location">
    <subcellularLocation>
        <location>Plastid</location>
        <location>Chloroplast</location>
    </subcellularLocation>
</comment>
<comment type="domain">
    <text>The N-terminal region contains the highly conserved SGGXDS motif, predicted to be a P-loop motif involved in ATP binding.</text>
</comment>
<comment type="similarity">
    <text evidence="1">Belongs to the tRNA(Ile)-lysidine synthase family.</text>
</comment>
<dbReference type="EC" id="6.3.4.19" evidence="1"/>
<dbReference type="EMBL" id="AY673996">
    <property type="protein sequence ID" value="AAT79774.1"/>
    <property type="molecule type" value="Genomic_DNA"/>
</dbReference>
<dbReference type="RefSeq" id="YP_063699.1">
    <property type="nucleotide sequence ID" value="NC_006137.1"/>
</dbReference>
<dbReference type="SMR" id="Q6B8L1"/>
<dbReference type="GeneID" id="2944013"/>
<dbReference type="GO" id="GO:0009507">
    <property type="term" value="C:chloroplast"/>
    <property type="evidence" value="ECO:0007669"/>
    <property type="project" value="UniProtKB-SubCell"/>
</dbReference>
<dbReference type="GO" id="GO:0005524">
    <property type="term" value="F:ATP binding"/>
    <property type="evidence" value="ECO:0007669"/>
    <property type="project" value="UniProtKB-UniRule"/>
</dbReference>
<dbReference type="GO" id="GO:0032267">
    <property type="term" value="F:tRNA(Ile)-lysidine synthase activity"/>
    <property type="evidence" value="ECO:0007669"/>
    <property type="project" value="UniProtKB-EC"/>
</dbReference>
<dbReference type="GO" id="GO:0006400">
    <property type="term" value="P:tRNA modification"/>
    <property type="evidence" value="ECO:0007669"/>
    <property type="project" value="UniProtKB-UniRule"/>
</dbReference>
<dbReference type="CDD" id="cd01992">
    <property type="entry name" value="TilS_N"/>
    <property type="match status" value="1"/>
</dbReference>
<dbReference type="Gene3D" id="3.40.50.620">
    <property type="entry name" value="HUPs"/>
    <property type="match status" value="1"/>
</dbReference>
<dbReference type="HAMAP" id="MF_01161">
    <property type="entry name" value="tRNA_Ile_lys_synt"/>
    <property type="match status" value="1"/>
</dbReference>
<dbReference type="InterPro" id="IPR014729">
    <property type="entry name" value="Rossmann-like_a/b/a_fold"/>
</dbReference>
<dbReference type="InterPro" id="IPR011063">
    <property type="entry name" value="TilS/TtcA_N"/>
</dbReference>
<dbReference type="InterPro" id="IPR012094">
    <property type="entry name" value="tRNA_Ile_lys_synt"/>
</dbReference>
<dbReference type="InterPro" id="IPR012795">
    <property type="entry name" value="tRNA_Ile_lys_synt_N"/>
</dbReference>
<dbReference type="NCBIfam" id="TIGR02432">
    <property type="entry name" value="lysidine_TilS_N"/>
    <property type="match status" value="1"/>
</dbReference>
<dbReference type="PANTHER" id="PTHR43033">
    <property type="entry name" value="TRNA(ILE)-LYSIDINE SYNTHASE-RELATED"/>
    <property type="match status" value="1"/>
</dbReference>
<dbReference type="PANTHER" id="PTHR43033:SF1">
    <property type="entry name" value="TRNA(ILE)-LYSIDINE SYNTHASE-RELATED"/>
    <property type="match status" value="1"/>
</dbReference>
<dbReference type="Pfam" id="PF01171">
    <property type="entry name" value="ATP_bind_3"/>
    <property type="match status" value="1"/>
</dbReference>
<dbReference type="SUPFAM" id="SSF52402">
    <property type="entry name" value="Adenine nucleotide alpha hydrolases-like"/>
    <property type="match status" value="1"/>
</dbReference>
<dbReference type="SUPFAM" id="SSF82829">
    <property type="entry name" value="MesJ substrate recognition domain-like"/>
    <property type="match status" value="1"/>
</dbReference>
<feature type="chain" id="PRO_0000181818" description="tRNA(Ile)-lysidine synthase, chloroplastic">
    <location>
        <begin position="1"/>
        <end position="320"/>
    </location>
</feature>
<feature type="binding site" evidence="1">
    <location>
        <begin position="31"/>
        <end position="36"/>
    </location>
    <ligand>
        <name>ATP</name>
        <dbReference type="ChEBI" id="CHEBI:30616"/>
    </ligand>
</feature>